<name>ACT5_ARATH</name>
<accession>Q8RYC2</accession>
<accession>P93737</accession>
<dbReference type="EMBL" id="AC002561">
    <property type="protein sequence ID" value="AAF18605.2"/>
    <property type="status" value="ALT_INIT"/>
    <property type="molecule type" value="Genomic_DNA"/>
</dbReference>
<dbReference type="EMBL" id="U90439">
    <property type="protein sequence ID" value="AAM15522.1"/>
    <property type="molecule type" value="Genomic_DNA"/>
</dbReference>
<dbReference type="EMBL" id="CP002685">
    <property type="protein sequence ID" value="AEC10070.1"/>
    <property type="molecule type" value="Genomic_DNA"/>
</dbReference>
<dbReference type="PIR" id="H84849">
    <property type="entry name" value="H84849"/>
</dbReference>
<dbReference type="PIR" id="T00920">
    <property type="entry name" value="T00920"/>
</dbReference>
<dbReference type="RefSeq" id="NP_181740.1">
    <property type="nucleotide sequence ID" value="NM_129773.1"/>
</dbReference>
<dbReference type="SMR" id="Q8RYC2"/>
<dbReference type="BioGRID" id="4147">
    <property type="interactions" value="2"/>
</dbReference>
<dbReference type="FunCoup" id="Q8RYC2">
    <property type="interactions" value="28"/>
</dbReference>
<dbReference type="STRING" id="3702.Q8RYC2"/>
<dbReference type="PaxDb" id="3702-AT2G42100.1"/>
<dbReference type="EnsemblPlants" id="AT2G42100.1">
    <property type="protein sequence ID" value="AT2G42100.1"/>
    <property type="gene ID" value="AT2G42100"/>
</dbReference>
<dbReference type="GeneID" id="818810"/>
<dbReference type="Gramene" id="AT2G42100.1">
    <property type="protein sequence ID" value="AT2G42100.1"/>
    <property type="gene ID" value="AT2G42100"/>
</dbReference>
<dbReference type="KEGG" id="ath:AT2G42100"/>
<dbReference type="Araport" id="AT2G42100"/>
<dbReference type="TAIR" id="AT2G42100"/>
<dbReference type="eggNOG" id="KOG0676">
    <property type="taxonomic scope" value="Eukaryota"/>
</dbReference>
<dbReference type="HOGENOM" id="CLU_027965_0_2_1"/>
<dbReference type="InParanoid" id="Q8RYC2"/>
<dbReference type="OMA" id="SMYIGIQ"/>
<dbReference type="PhylomeDB" id="Q8RYC2"/>
<dbReference type="Proteomes" id="UP000006548">
    <property type="component" value="Chromosome 2"/>
</dbReference>
<dbReference type="ExpressionAtlas" id="Q8RYC2">
    <property type="expression patterns" value="baseline and differential"/>
</dbReference>
<dbReference type="GO" id="GO:0005856">
    <property type="term" value="C:cytoskeleton"/>
    <property type="evidence" value="ECO:0007669"/>
    <property type="project" value="UniProtKB-SubCell"/>
</dbReference>
<dbReference type="GO" id="GO:0005829">
    <property type="term" value="C:cytosol"/>
    <property type="evidence" value="ECO:0007005"/>
    <property type="project" value="TAIR"/>
</dbReference>
<dbReference type="GO" id="GO:0005524">
    <property type="term" value="F:ATP binding"/>
    <property type="evidence" value="ECO:0007669"/>
    <property type="project" value="UniProtKB-KW"/>
</dbReference>
<dbReference type="CDD" id="cd10224">
    <property type="entry name" value="ASKHA_NBD_actin"/>
    <property type="match status" value="1"/>
</dbReference>
<dbReference type="FunFam" id="2.30.36.70:FF:000001">
    <property type="entry name" value="Actin, alpha skeletal muscle"/>
    <property type="match status" value="1"/>
</dbReference>
<dbReference type="FunFam" id="3.30.420.40:FF:000205">
    <property type="entry name" value="Actin, alpha skeletal muscle"/>
    <property type="match status" value="1"/>
</dbReference>
<dbReference type="FunFam" id="3.90.640.10:FF:000001">
    <property type="entry name" value="Actin, muscle"/>
    <property type="match status" value="1"/>
</dbReference>
<dbReference type="FunFam" id="3.30.420.40:FF:000018">
    <property type="entry name" value="Actin-like protein (Centractin)"/>
    <property type="match status" value="1"/>
</dbReference>
<dbReference type="FunFam" id="3.30.420.40:FF:000404">
    <property type="entry name" value="Major actin"/>
    <property type="match status" value="1"/>
</dbReference>
<dbReference type="FunFam" id="3.30.420.40:FF:000058">
    <property type="entry name" value="Putative actin-related protein 5"/>
    <property type="match status" value="1"/>
</dbReference>
<dbReference type="Gene3D" id="3.30.420.40">
    <property type="match status" value="2"/>
</dbReference>
<dbReference type="Gene3D" id="3.90.640.10">
    <property type="entry name" value="Actin, Chain A, domain 4"/>
    <property type="match status" value="1"/>
</dbReference>
<dbReference type="InterPro" id="IPR004000">
    <property type="entry name" value="Actin"/>
</dbReference>
<dbReference type="InterPro" id="IPR020902">
    <property type="entry name" value="Actin/actin-like_CS"/>
</dbReference>
<dbReference type="InterPro" id="IPR004001">
    <property type="entry name" value="Actin_CS"/>
</dbReference>
<dbReference type="InterPro" id="IPR043129">
    <property type="entry name" value="ATPase_NBD"/>
</dbReference>
<dbReference type="PANTHER" id="PTHR11937">
    <property type="entry name" value="ACTIN"/>
    <property type="match status" value="1"/>
</dbReference>
<dbReference type="Pfam" id="PF00022">
    <property type="entry name" value="Actin"/>
    <property type="match status" value="1"/>
</dbReference>
<dbReference type="PRINTS" id="PR00190">
    <property type="entry name" value="ACTIN"/>
</dbReference>
<dbReference type="SMART" id="SM00268">
    <property type="entry name" value="ACTIN"/>
    <property type="match status" value="1"/>
</dbReference>
<dbReference type="SUPFAM" id="SSF53067">
    <property type="entry name" value="Actin-like ATPase domain"/>
    <property type="match status" value="2"/>
</dbReference>
<dbReference type="PROSITE" id="PS00406">
    <property type="entry name" value="ACTINS_1"/>
    <property type="match status" value="1"/>
</dbReference>
<dbReference type="PROSITE" id="PS00432">
    <property type="entry name" value="ACTINS_2"/>
    <property type="match status" value="1"/>
</dbReference>
<dbReference type="PROSITE" id="PS01132">
    <property type="entry name" value="ACTINS_ACT_LIKE"/>
    <property type="match status" value="1"/>
</dbReference>
<comment type="function">
    <text>Actins are highly conserved proteins that are involved in various types of cell motility and are ubiquitously expressed in all eukaryotic cells. Essential component of cell cytoskeleton; plays an important role in cytoplasmic streaming, cell shape determination, cell division, organelle movement and extension growth.</text>
</comment>
<comment type="subunit">
    <text>Polymerization of globular actin (G-actin) leads to a structural filament (F-actin) in the form of a two-stranded helix. The binding of profilin to monomeric G-actin cause the sequestration of actin into profilactin complexes, and prevents the polymerization.</text>
</comment>
<comment type="subcellular location">
    <subcellularLocation>
        <location>Cytoplasm</location>
        <location>Cytoskeleton</location>
    </subcellularLocation>
</comment>
<comment type="miscellaneous">
    <text>There are 8 actin genes in A.thaliana.</text>
</comment>
<comment type="similarity">
    <text evidence="1">Belongs to the actin family.</text>
</comment>
<comment type="caution">
    <text evidence="1">Could be the product of a pseudogene.</text>
</comment>
<comment type="sequence caution" evidence="1">
    <conflict type="erroneous initiation">
        <sequence resource="EMBL-CDS" id="AAF18605"/>
    </conflict>
</comment>
<gene>
    <name type="primary">ACT5</name>
    <name type="ordered locus">At2g42100</name>
    <name type="ORF">T24P15.22</name>
    <name type="ORF">T6D20.1</name>
</gene>
<reference key="1">
    <citation type="journal article" date="1999" name="Nature">
        <title>Sequence and analysis of chromosome 2 of the plant Arabidopsis thaliana.</title>
        <authorList>
            <person name="Lin X."/>
            <person name="Kaul S."/>
            <person name="Rounsley S.D."/>
            <person name="Shea T.P."/>
            <person name="Benito M.-I."/>
            <person name="Town C.D."/>
            <person name="Fujii C.Y."/>
            <person name="Mason T.M."/>
            <person name="Bowman C.L."/>
            <person name="Barnstead M.E."/>
            <person name="Feldblyum T.V."/>
            <person name="Buell C.R."/>
            <person name="Ketchum K.A."/>
            <person name="Lee J.J."/>
            <person name="Ronning C.M."/>
            <person name="Koo H.L."/>
            <person name="Moffat K.S."/>
            <person name="Cronin L.A."/>
            <person name="Shen M."/>
            <person name="Pai G."/>
            <person name="Van Aken S."/>
            <person name="Umayam L."/>
            <person name="Tallon L.J."/>
            <person name="Gill J.E."/>
            <person name="Adams M.D."/>
            <person name="Carrera A.J."/>
            <person name="Creasy T.H."/>
            <person name="Goodman H.M."/>
            <person name="Somerville C.R."/>
            <person name="Copenhaver G.P."/>
            <person name="Preuss D."/>
            <person name="Nierman W.C."/>
            <person name="White O."/>
            <person name="Eisen J.A."/>
            <person name="Salzberg S.L."/>
            <person name="Fraser C.M."/>
            <person name="Venter J.C."/>
        </authorList>
    </citation>
    <scope>NUCLEOTIDE SEQUENCE [LARGE SCALE GENOMIC DNA]</scope>
    <source>
        <strain>cv. Columbia</strain>
    </source>
</reference>
<reference key="2">
    <citation type="journal article" date="2017" name="Plant J.">
        <title>Araport11: a complete reannotation of the Arabidopsis thaliana reference genome.</title>
        <authorList>
            <person name="Cheng C.Y."/>
            <person name="Krishnakumar V."/>
            <person name="Chan A.P."/>
            <person name="Thibaud-Nissen F."/>
            <person name="Schobel S."/>
            <person name="Town C.D."/>
        </authorList>
    </citation>
    <scope>GENOME REANNOTATION</scope>
    <source>
        <strain>cv. Columbia</strain>
    </source>
</reference>
<reference key="3">
    <citation type="journal article" date="1996" name="Genetics">
        <title>Structure and evolution of the actin gene family in Arabidopsis thaliana.</title>
        <authorList>
            <person name="McDowell J.M."/>
            <person name="Huang S."/>
            <person name="McKinney E.C."/>
            <person name="An Y.-Q."/>
            <person name="Meagher R.B."/>
        </authorList>
    </citation>
    <scope>GENE FAMILY ORGANIZATION</scope>
    <source>
        <strain>cv. Columbia</strain>
    </source>
</reference>
<protein>
    <recommendedName>
        <fullName>Putative actin-5</fullName>
    </recommendedName>
</protein>
<organism>
    <name type="scientific">Arabidopsis thaliana</name>
    <name type="common">Mouse-ear cress</name>
    <dbReference type="NCBI Taxonomy" id="3702"/>
    <lineage>
        <taxon>Eukaryota</taxon>
        <taxon>Viridiplantae</taxon>
        <taxon>Streptophyta</taxon>
        <taxon>Embryophyta</taxon>
        <taxon>Tracheophyta</taxon>
        <taxon>Spermatophyta</taxon>
        <taxon>Magnoliopsida</taxon>
        <taxon>eudicotyledons</taxon>
        <taxon>Gunneridae</taxon>
        <taxon>Pentapetalae</taxon>
        <taxon>rosids</taxon>
        <taxon>malvids</taxon>
        <taxon>Brassicales</taxon>
        <taxon>Brassicaceae</taxon>
        <taxon>Camelineae</taxon>
        <taxon>Arabidopsis</taxon>
    </lineage>
</organism>
<evidence type="ECO:0000305" key="1"/>
<sequence>MSDLGDESVAIVCDNGTGMVKAGFAGDDAPRAVFPSVVGRPRHRGVMVGMDEKDTFVGDEAQARRGILSLKYPIEHGVVSNWDDMEKIWHHTFYNELRLEPEEHPILLTEAPLNPKVNREKMTQIMFESFAFPSMYIGIQAVLSLYSSGRTTGIVLDSGDGVSHTVPIYEGYALPHAILRLDLAGRDLTEYLTKIMMERGYTYTTSAEREIVRDIKEKLCYIAVDYEQEMEKATTSSAIDRTYELPDGQVITIGAERFRCPEVLFQTSLIGMETSGIHETTYNSIMKCDVDIRKDLYGNIVLSGGTTMFPGIADRMNKEINALAPPSMKIKVVAPPERKYSVWVGGSILASLSSFAPMWITKAEYDEQGGAIVHRKCF</sequence>
<keyword id="KW-0067">ATP-binding</keyword>
<keyword id="KW-0963">Cytoplasm</keyword>
<keyword id="KW-0206">Cytoskeleton</keyword>
<keyword id="KW-0547">Nucleotide-binding</keyword>
<keyword id="KW-1185">Reference proteome</keyword>
<feature type="chain" id="PRO_0000088891" description="Putative actin-5">
    <location>
        <begin position="1"/>
        <end position="378"/>
    </location>
</feature>
<proteinExistence type="uncertain"/>